<name>RL19_STRZP</name>
<feature type="chain" id="PRO_1000193898" description="Large ribosomal subunit protein bL19">
    <location>
        <begin position="1"/>
        <end position="115"/>
    </location>
</feature>
<sequence>MNPLIQSLTEGQLRTDIPSFRPGDTVRVHAKVVEGNRERIQIFEGVVIARKGAGISENYTVRKISNGVGVERIFPIHTPRVEKIEVVRYGKVRRAKLYYLRALQGKAARIKEIRR</sequence>
<evidence type="ECO:0000255" key="1">
    <source>
        <dbReference type="HAMAP-Rule" id="MF_00402"/>
    </source>
</evidence>
<evidence type="ECO:0000305" key="2"/>
<protein>
    <recommendedName>
        <fullName evidence="1">Large ribosomal subunit protein bL19</fullName>
    </recommendedName>
    <alternativeName>
        <fullName evidence="2">50S ribosomal protein L19</fullName>
    </alternativeName>
</protein>
<organism>
    <name type="scientific">Streptococcus pneumoniae (strain P1031)</name>
    <dbReference type="NCBI Taxonomy" id="488223"/>
    <lineage>
        <taxon>Bacteria</taxon>
        <taxon>Bacillati</taxon>
        <taxon>Bacillota</taxon>
        <taxon>Bacilli</taxon>
        <taxon>Lactobacillales</taxon>
        <taxon>Streptococcaceae</taxon>
        <taxon>Streptococcus</taxon>
    </lineage>
</organism>
<accession>C1CL28</accession>
<gene>
    <name evidence="1" type="primary">rplS</name>
    <name type="ordered locus">SPP_1333</name>
</gene>
<comment type="function">
    <text evidence="1">This protein is located at the 30S-50S ribosomal subunit interface and may play a role in the structure and function of the aminoacyl-tRNA binding site.</text>
</comment>
<comment type="similarity">
    <text evidence="1">Belongs to the bacterial ribosomal protein bL19 family.</text>
</comment>
<dbReference type="EMBL" id="CP000920">
    <property type="protein sequence ID" value="ACO21949.1"/>
    <property type="molecule type" value="Genomic_DNA"/>
</dbReference>
<dbReference type="RefSeq" id="WP_001068669.1">
    <property type="nucleotide sequence ID" value="NC_012467.1"/>
</dbReference>
<dbReference type="SMR" id="C1CL28"/>
<dbReference type="GeneID" id="93739485"/>
<dbReference type="KEGG" id="spp:SPP_1333"/>
<dbReference type="HOGENOM" id="CLU_103507_2_1_9"/>
<dbReference type="GO" id="GO:0022625">
    <property type="term" value="C:cytosolic large ribosomal subunit"/>
    <property type="evidence" value="ECO:0007669"/>
    <property type="project" value="TreeGrafter"/>
</dbReference>
<dbReference type="GO" id="GO:0003735">
    <property type="term" value="F:structural constituent of ribosome"/>
    <property type="evidence" value="ECO:0007669"/>
    <property type="project" value="InterPro"/>
</dbReference>
<dbReference type="GO" id="GO:0006412">
    <property type="term" value="P:translation"/>
    <property type="evidence" value="ECO:0007669"/>
    <property type="project" value="UniProtKB-UniRule"/>
</dbReference>
<dbReference type="FunFam" id="2.30.30.790:FF:000001">
    <property type="entry name" value="50S ribosomal protein L19"/>
    <property type="match status" value="1"/>
</dbReference>
<dbReference type="Gene3D" id="2.30.30.790">
    <property type="match status" value="1"/>
</dbReference>
<dbReference type="HAMAP" id="MF_00402">
    <property type="entry name" value="Ribosomal_bL19"/>
    <property type="match status" value="1"/>
</dbReference>
<dbReference type="InterPro" id="IPR001857">
    <property type="entry name" value="Ribosomal_bL19"/>
</dbReference>
<dbReference type="InterPro" id="IPR018257">
    <property type="entry name" value="Ribosomal_bL19_CS"/>
</dbReference>
<dbReference type="InterPro" id="IPR038657">
    <property type="entry name" value="Ribosomal_bL19_sf"/>
</dbReference>
<dbReference type="InterPro" id="IPR008991">
    <property type="entry name" value="Translation_prot_SH3-like_sf"/>
</dbReference>
<dbReference type="NCBIfam" id="TIGR01024">
    <property type="entry name" value="rplS_bact"/>
    <property type="match status" value="1"/>
</dbReference>
<dbReference type="PANTHER" id="PTHR15680:SF9">
    <property type="entry name" value="LARGE RIBOSOMAL SUBUNIT PROTEIN BL19M"/>
    <property type="match status" value="1"/>
</dbReference>
<dbReference type="PANTHER" id="PTHR15680">
    <property type="entry name" value="RIBOSOMAL PROTEIN L19"/>
    <property type="match status" value="1"/>
</dbReference>
<dbReference type="Pfam" id="PF01245">
    <property type="entry name" value="Ribosomal_L19"/>
    <property type="match status" value="1"/>
</dbReference>
<dbReference type="PIRSF" id="PIRSF002191">
    <property type="entry name" value="Ribosomal_L19"/>
    <property type="match status" value="1"/>
</dbReference>
<dbReference type="PRINTS" id="PR00061">
    <property type="entry name" value="RIBOSOMALL19"/>
</dbReference>
<dbReference type="SUPFAM" id="SSF50104">
    <property type="entry name" value="Translation proteins SH3-like domain"/>
    <property type="match status" value="1"/>
</dbReference>
<dbReference type="PROSITE" id="PS01015">
    <property type="entry name" value="RIBOSOMAL_L19"/>
    <property type="match status" value="1"/>
</dbReference>
<proteinExistence type="inferred from homology"/>
<keyword id="KW-0687">Ribonucleoprotein</keyword>
<keyword id="KW-0689">Ribosomal protein</keyword>
<reference key="1">
    <citation type="journal article" date="2010" name="Genome Biol.">
        <title>Structure and dynamics of the pan-genome of Streptococcus pneumoniae and closely related species.</title>
        <authorList>
            <person name="Donati C."/>
            <person name="Hiller N.L."/>
            <person name="Tettelin H."/>
            <person name="Muzzi A."/>
            <person name="Croucher N.J."/>
            <person name="Angiuoli S.V."/>
            <person name="Oggioni M."/>
            <person name="Dunning Hotopp J.C."/>
            <person name="Hu F.Z."/>
            <person name="Riley D.R."/>
            <person name="Covacci A."/>
            <person name="Mitchell T.J."/>
            <person name="Bentley S.D."/>
            <person name="Kilian M."/>
            <person name="Ehrlich G.D."/>
            <person name="Rappuoli R."/>
            <person name="Moxon E.R."/>
            <person name="Masignani V."/>
        </authorList>
    </citation>
    <scope>NUCLEOTIDE SEQUENCE [LARGE SCALE GENOMIC DNA]</scope>
    <source>
        <strain>P1031</strain>
    </source>
</reference>